<gene>
    <name evidence="1" type="primary">panB</name>
    <name type="ordered locus">IL2254</name>
</gene>
<proteinExistence type="inferred from homology"/>
<comment type="function">
    <text evidence="1">Catalyzes the reversible reaction in which hydroxymethyl group from 5,10-methylenetetrahydrofolate is transferred onto alpha-ketoisovalerate to form ketopantoate.</text>
</comment>
<comment type="catalytic activity">
    <reaction evidence="1">
        <text>3-methyl-2-oxobutanoate + (6R)-5,10-methylene-5,6,7,8-tetrahydrofolate + H2O = 2-dehydropantoate + (6S)-5,6,7,8-tetrahydrofolate</text>
        <dbReference type="Rhea" id="RHEA:11824"/>
        <dbReference type="ChEBI" id="CHEBI:11561"/>
        <dbReference type="ChEBI" id="CHEBI:11851"/>
        <dbReference type="ChEBI" id="CHEBI:15377"/>
        <dbReference type="ChEBI" id="CHEBI:15636"/>
        <dbReference type="ChEBI" id="CHEBI:57453"/>
        <dbReference type="EC" id="2.1.2.11"/>
    </reaction>
</comment>
<comment type="cofactor">
    <cofactor evidence="1">
        <name>Mg(2+)</name>
        <dbReference type="ChEBI" id="CHEBI:18420"/>
    </cofactor>
    <text evidence="1">Binds 1 Mg(2+) ion per subunit.</text>
</comment>
<comment type="pathway">
    <text evidence="1">Cofactor biosynthesis; (R)-pantothenate biosynthesis; (R)-pantoate from 3-methyl-2-oxobutanoate: step 1/2.</text>
</comment>
<comment type="subunit">
    <text evidence="1">Homodecamer; pentamer of dimers.</text>
</comment>
<comment type="subcellular location">
    <subcellularLocation>
        <location evidence="1">Cytoplasm</location>
    </subcellularLocation>
</comment>
<comment type="similarity">
    <text evidence="1">Belongs to the PanB family.</text>
</comment>
<name>PANB_IDILO</name>
<reference key="1">
    <citation type="journal article" date="2004" name="Proc. Natl. Acad. Sci. U.S.A.">
        <title>Genome sequence of the deep-sea gamma-proteobacterium Idiomarina loihiensis reveals amino acid fermentation as a source of carbon and energy.</title>
        <authorList>
            <person name="Hou S."/>
            <person name="Saw J.H."/>
            <person name="Lee K.S."/>
            <person name="Freitas T.A."/>
            <person name="Belisle C."/>
            <person name="Kawarabayasi Y."/>
            <person name="Donachie S.P."/>
            <person name="Pikina A."/>
            <person name="Galperin M.Y."/>
            <person name="Koonin E.V."/>
            <person name="Makarova K.S."/>
            <person name="Omelchenko M.V."/>
            <person name="Sorokin A."/>
            <person name="Wolf Y.I."/>
            <person name="Li Q.X."/>
            <person name="Keum Y.S."/>
            <person name="Campbell S."/>
            <person name="Denery J."/>
            <person name="Aizawa S."/>
            <person name="Shibata S."/>
            <person name="Malahoff A."/>
            <person name="Alam M."/>
        </authorList>
    </citation>
    <scope>NUCLEOTIDE SEQUENCE [LARGE SCALE GENOMIC DNA]</scope>
    <source>
        <strain>ATCC BAA-735 / DSM 15497 / L2-TR</strain>
    </source>
</reference>
<keyword id="KW-0963">Cytoplasm</keyword>
<keyword id="KW-0460">Magnesium</keyword>
<keyword id="KW-0479">Metal-binding</keyword>
<keyword id="KW-0566">Pantothenate biosynthesis</keyword>
<keyword id="KW-1185">Reference proteome</keyword>
<keyword id="KW-0808">Transferase</keyword>
<dbReference type="EC" id="2.1.2.11" evidence="1"/>
<dbReference type="EMBL" id="AE017340">
    <property type="protein sequence ID" value="AAV83086.1"/>
    <property type="molecule type" value="Genomic_DNA"/>
</dbReference>
<dbReference type="RefSeq" id="WP_011235481.1">
    <property type="nucleotide sequence ID" value="NC_006512.1"/>
</dbReference>
<dbReference type="SMR" id="Q5QVR5"/>
<dbReference type="STRING" id="283942.IL2254"/>
<dbReference type="GeneID" id="41337443"/>
<dbReference type="KEGG" id="ilo:IL2254"/>
<dbReference type="eggNOG" id="COG0413">
    <property type="taxonomic scope" value="Bacteria"/>
</dbReference>
<dbReference type="HOGENOM" id="CLU_036645_1_0_6"/>
<dbReference type="OrthoDB" id="9781789at2"/>
<dbReference type="UniPathway" id="UPA00028">
    <property type="reaction ID" value="UER00003"/>
</dbReference>
<dbReference type="Proteomes" id="UP000001171">
    <property type="component" value="Chromosome"/>
</dbReference>
<dbReference type="GO" id="GO:0005737">
    <property type="term" value="C:cytoplasm"/>
    <property type="evidence" value="ECO:0007669"/>
    <property type="project" value="UniProtKB-SubCell"/>
</dbReference>
<dbReference type="GO" id="GO:0003864">
    <property type="term" value="F:3-methyl-2-oxobutanoate hydroxymethyltransferase activity"/>
    <property type="evidence" value="ECO:0007669"/>
    <property type="project" value="UniProtKB-UniRule"/>
</dbReference>
<dbReference type="GO" id="GO:0000287">
    <property type="term" value="F:magnesium ion binding"/>
    <property type="evidence" value="ECO:0007669"/>
    <property type="project" value="TreeGrafter"/>
</dbReference>
<dbReference type="GO" id="GO:0015940">
    <property type="term" value="P:pantothenate biosynthetic process"/>
    <property type="evidence" value="ECO:0007669"/>
    <property type="project" value="UniProtKB-UniRule"/>
</dbReference>
<dbReference type="CDD" id="cd06557">
    <property type="entry name" value="KPHMT-like"/>
    <property type="match status" value="1"/>
</dbReference>
<dbReference type="FunFam" id="3.20.20.60:FF:000003">
    <property type="entry name" value="3-methyl-2-oxobutanoate hydroxymethyltransferase"/>
    <property type="match status" value="1"/>
</dbReference>
<dbReference type="Gene3D" id="3.20.20.60">
    <property type="entry name" value="Phosphoenolpyruvate-binding domains"/>
    <property type="match status" value="1"/>
</dbReference>
<dbReference type="HAMAP" id="MF_00156">
    <property type="entry name" value="PanB"/>
    <property type="match status" value="1"/>
</dbReference>
<dbReference type="InterPro" id="IPR003700">
    <property type="entry name" value="Pantoate_hydroxy_MeTrfase"/>
</dbReference>
<dbReference type="InterPro" id="IPR015813">
    <property type="entry name" value="Pyrv/PenolPyrv_kinase-like_dom"/>
</dbReference>
<dbReference type="InterPro" id="IPR040442">
    <property type="entry name" value="Pyrv_kinase-like_dom_sf"/>
</dbReference>
<dbReference type="NCBIfam" id="TIGR00222">
    <property type="entry name" value="panB"/>
    <property type="match status" value="1"/>
</dbReference>
<dbReference type="NCBIfam" id="NF001452">
    <property type="entry name" value="PRK00311.1"/>
    <property type="match status" value="1"/>
</dbReference>
<dbReference type="PANTHER" id="PTHR20881">
    <property type="entry name" value="3-METHYL-2-OXOBUTANOATE HYDROXYMETHYLTRANSFERASE"/>
    <property type="match status" value="1"/>
</dbReference>
<dbReference type="PANTHER" id="PTHR20881:SF0">
    <property type="entry name" value="3-METHYL-2-OXOBUTANOATE HYDROXYMETHYLTRANSFERASE"/>
    <property type="match status" value="1"/>
</dbReference>
<dbReference type="Pfam" id="PF02548">
    <property type="entry name" value="Pantoate_transf"/>
    <property type="match status" value="1"/>
</dbReference>
<dbReference type="PIRSF" id="PIRSF000388">
    <property type="entry name" value="Pantoate_hydroxy_MeTrfase"/>
    <property type="match status" value="1"/>
</dbReference>
<dbReference type="SUPFAM" id="SSF51621">
    <property type="entry name" value="Phosphoenolpyruvate/pyruvate domain"/>
    <property type="match status" value="1"/>
</dbReference>
<protein>
    <recommendedName>
        <fullName evidence="1">3-methyl-2-oxobutanoate hydroxymethyltransferase</fullName>
        <ecNumber evidence="1">2.1.2.11</ecNumber>
    </recommendedName>
    <alternativeName>
        <fullName evidence="1">Ketopantoate hydroxymethyltransferase</fullName>
        <shortName evidence="1">KPHMT</shortName>
    </alternativeName>
</protein>
<evidence type="ECO:0000255" key="1">
    <source>
        <dbReference type="HAMAP-Rule" id="MF_00156"/>
    </source>
</evidence>
<organism>
    <name type="scientific">Idiomarina loihiensis (strain ATCC BAA-735 / DSM 15497 / L2-TR)</name>
    <dbReference type="NCBI Taxonomy" id="283942"/>
    <lineage>
        <taxon>Bacteria</taxon>
        <taxon>Pseudomonadati</taxon>
        <taxon>Pseudomonadota</taxon>
        <taxon>Gammaproteobacteria</taxon>
        <taxon>Alteromonadales</taxon>
        <taxon>Idiomarinaceae</taxon>
        <taxon>Idiomarina</taxon>
    </lineage>
</organism>
<feature type="chain" id="PRO_0000184852" description="3-methyl-2-oxobutanoate hydroxymethyltransferase">
    <location>
        <begin position="1"/>
        <end position="266"/>
    </location>
</feature>
<feature type="active site" description="Proton acceptor" evidence="1">
    <location>
        <position position="183"/>
    </location>
</feature>
<feature type="binding site" evidence="1">
    <location>
        <begin position="47"/>
        <end position="48"/>
    </location>
    <ligand>
        <name>3-methyl-2-oxobutanoate</name>
        <dbReference type="ChEBI" id="CHEBI:11851"/>
    </ligand>
</feature>
<feature type="binding site" evidence="1">
    <location>
        <position position="47"/>
    </location>
    <ligand>
        <name>Mg(2+)</name>
        <dbReference type="ChEBI" id="CHEBI:18420"/>
    </ligand>
</feature>
<feature type="binding site" evidence="1">
    <location>
        <position position="86"/>
    </location>
    <ligand>
        <name>3-methyl-2-oxobutanoate</name>
        <dbReference type="ChEBI" id="CHEBI:11851"/>
    </ligand>
</feature>
<feature type="binding site" evidence="1">
    <location>
        <position position="86"/>
    </location>
    <ligand>
        <name>Mg(2+)</name>
        <dbReference type="ChEBI" id="CHEBI:18420"/>
    </ligand>
</feature>
<feature type="binding site" evidence="1">
    <location>
        <position position="114"/>
    </location>
    <ligand>
        <name>3-methyl-2-oxobutanoate</name>
        <dbReference type="ChEBI" id="CHEBI:11851"/>
    </ligand>
</feature>
<feature type="binding site" evidence="1">
    <location>
        <position position="116"/>
    </location>
    <ligand>
        <name>Mg(2+)</name>
        <dbReference type="ChEBI" id="CHEBI:18420"/>
    </ligand>
</feature>
<sequence length="266" mass="28569">MATTKTSIATLQKMKREGTKISSLTAYDSSFAKLMTEQGVDFILVGDSLGNVVQGRDSTVPVTVDDMIYHTQCVRRGASNAFVIADMPFMTYSTPEQAYDVAAALMQAGANMVKLEGGHWLVETIEGLKTRGIPVCAHLGLLPQSVNVLGGYKVQGKEQQQADDTLNQALALEQAGAQLLVLECVPASLGKRITEQLSIPTIGIGAGADTDGQILVMHDMLGMNSDYLPKFAKDFLAQGGSLADAFRLYSEQVRSGEFPTAEHSYK</sequence>
<accession>Q5QVR5</accession>